<accession>B5YZ41</accession>
<name>RHAB_ECO5E</name>
<proteinExistence type="inferred from homology"/>
<gene>
    <name evidence="1" type="primary">rhaB</name>
    <name type="ordered locus">ECH74115_5356</name>
</gene>
<keyword id="KW-0067">ATP-binding</keyword>
<keyword id="KW-1015">Disulfide bond</keyword>
<keyword id="KW-0418">Kinase</keyword>
<keyword id="KW-0460">Magnesium</keyword>
<keyword id="KW-0547">Nucleotide-binding</keyword>
<keyword id="KW-0684">Rhamnose metabolism</keyword>
<keyword id="KW-0808">Transferase</keyword>
<feature type="chain" id="PRO_1000146539" description="Rhamnulokinase">
    <location>
        <begin position="1"/>
        <end position="489"/>
    </location>
</feature>
<feature type="active site" description="Proton acceptor" evidence="1">
    <location>
        <position position="237"/>
    </location>
</feature>
<feature type="binding site" evidence="1">
    <location>
        <begin position="13"/>
        <end position="17"/>
    </location>
    <ligand>
        <name>ATP</name>
        <dbReference type="ChEBI" id="CHEBI:30616"/>
    </ligand>
</feature>
<feature type="binding site" evidence="1">
    <location>
        <position position="83"/>
    </location>
    <ligand>
        <name>substrate</name>
    </ligand>
</feature>
<feature type="binding site" evidence="1">
    <location>
        <begin position="236"/>
        <end position="238"/>
    </location>
    <ligand>
        <name>substrate</name>
    </ligand>
</feature>
<feature type="binding site" evidence="1">
    <location>
        <position position="259"/>
    </location>
    <ligand>
        <name>ATP</name>
        <dbReference type="ChEBI" id="CHEBI:30616"/>
    </ligand>
</feature>
<feature type="binding site" evidence="1">
    <location>
        <position position="296"/>
    </location>
    <ligand>
        <name>substrate</name>
    </ligand>
</feature>
<feature type="binding site" evidence="1">
    <location>
        <position position="304"/>
    </location>
    <ligand>
        <name>ATP</name>
        <dbReference type="ChEBI" id="CHEBI:30616"/>
    </ligand>
</feature>
<feature type="binding site" evidence="1">
    <location>
        <position position="402"/>
    </location>
    <ligand>
        <name>ATP</name>
        <dbReference type="ChEBI" id="CHEBI:30616"/>
    </ligand>
</feature>
<feature type="disulfide bond" evidence="1">
    <location>
        <begin position="68"/>
        <end position="222"/>
    </location>
</feature>
<feature type="disulfide bond" evidence="1">
    <location>
        <begin position="353"/>
        <end position="370"/>
    </location>
</feature>
<feature type="disulfide bond" evidence="1">
    <location>
        <begin position="413"/>
        <end position="417"/>
    </location>
</feature>
<dbReference type="EC" id="2.7.1.5" evidence="1"/>
<dbReference type="EMBL" id="CP001164">
    <property type="protein sequence ID" value="ACI34877.1"/>
    <property type="molecule type" value="Genomic_DNA"/>
</dbReference>
<dbReference type="RefSeq" id="WP_000144081.1">
    <property type="nucleotide sequence ID" value="NC_011353.1"/>
</dbReference>
<dbReference type="SMR" id="B5YZ41"/>
<dbReference type="KEGG" id="ecf:ECH74115_5356"/>
<dbReference type="HOGENOM" id="CLU_039395_0_0_6"/>
<dbReference type="UniPathway" id="UPA00541">
    <property type="reaction ID" value="UER00602"/>
</dbReference>
<dbReference type="GO" id="GO:0005829">
    <property type="term" value="C:cytosol"/>
    <property type="evidence" value="ECO:0007669"/>
    <property type="project" value="TreeGrafter"/>
</dbReference>
<dbReference type="GO" id="GO:0005524">
    <property type="term" value="F:ATP binding"/>
    <property type="evidence" value="ECO:0007669"/>
    <property type="project" value="UniProtKB-KW"/>
</dbReference>
<dbReference type="GO" id="GO:0004370">
    <property type="term" value="F:glycerol kinase activity"/>
    <property type="evidence" value="ECO:0007669"/>
    <property type="project" value="TreeGrafter"/>
</dbReference>
<dbReference type="GO" id="GO:0008993">
    <property type="term" value="F:rhamnulokinase activity"/>
    <property type="evidence" value="ECO:0007669"/>
    <property type="project" value="UniProtKB-UniRule"/>
</dbReference>
<dbReference type="GO" id="GO:0006071">
    <property type="term" value="P:glycerol metabolic process"/>
    <property type="evidence" value="ECO:0007669"/>
    <property type="project" value="TreeGrafter"/>
</dbReference>
<dbReference type="GO" id="GO:0019301">
    <property type="term" value="P:rhamnose catabolic process"/>
    <property type="evidence" value="ECO:0007669"/>
    <property type="project" value="UniProtKB-UniRule"/>
</dbReference>
<dbReference type="CDD" id="cd07771">
    <property type="entry name" value="ASKHA_NBD_FGGY_RhaB-like"/>
    <property type="match status" value="1"/>
</dbReference>
<dbReference type="FunFam" id="3.30.420.40:FF:000064">
    <property type="entry name" value="Rhamnulokinase"/>
    <property type="match status" value="1"/>
</dbReference>
<dbReference type="FunFam" id="3.30.420.40:FF:000073">
    <property type="entry name" value="Rhamnulokinase"/>
    <property type="match status" value="1"/>
</dbReference>
<dbReference type="Gene3D" id="3.30.420.40">
    <property type="match status" value="2"/>
</dbReference>
<dbReference type="HAMAP" id="MF_01535">
    <property type="entry name" value="Rhamnulokinase"/>
    <property type="match status" value="1"/>
</dbReference>
<dbReference type="InterPro" id="IPR043129">
    <property type="entry name" value="ATPase_NBD"/>
</dbReference>
<dbReference type="InterPro" id="IPR018485">
    <property type="entry name" value="FGGY_C"/>
</dbReference>
<dbReference type="InterPro" id="IPR018484">
    <property type="entry name" value="FGGY_N"/>
</dbReference>
<dbReference type="InterPro" id="IPR013449">
    <property type="entry name" value="Rhamnulokinase"/>
</dbReference>
<dbReference type="NCBIfam" id="NF007925">
    <property type="entry name" value="PRK10640.1"/>
    <property type="match status" value="1"/>
</dbReference>
<dbReference type="NCBIfam" id="TIGR02627">
    <property type="entry name" value="rhamnulo_kin"/>
    <property type="match status" value="1"/>
</dbReference>
<dbReference type="PANTHER" id="PTHR10196:SF93">
    <property type="entry name" value="L-RHAMNULOKINASE"/>
    <property type="match status" value="1"/>
</dbReference>
<dbReference type="PANTHER" id="PTHR10196">
    <property type="entry name" value="SUGAR KINASE"/>
    <property type="match status" value="1"/>
</dbReference>
<dbReference type="Pfam" id="PF02782">
    <property type="entry name" value="FGGY_C"/>
    <property type="match status" value="1"/>
</dbReference>
<dbReference type="Pfam" id="PF00370">
    <property type="entry name" value="FGGY_N"/>
    <property type="match status" value="1"/>
</dbReference>
<dbReference type="SUPFAM" id="SSF53067">
    <property type="entry name" value="Actin-like ATPase domain"/>
    <property type="match status" value="2"/>
</dbReference>
<evidence type="ECO:0000255" key="1">
    <source>
        <dbReference type="HAMAP-Rule" id="MF_01535"/>
    </source>
</evidence>
<reference key="1">
    <citation type="journal article" date="2011" name="Proc. Natl. Acad. Sci. U.S.A.">
        <title>Genomic anatomy of Escherichia coli O157:H7 outbreaks.</title>
        <authorList>
            <person name="Eppinger M."/>
            <person name="Mammel M.K."/>
            <person name="Leclerc J.E."/>
            <person name="Ravel J."/>
            <person name="Cebula T.A."/>
        </authorList>
    </citation>
    <scope>NUCLEOTIDE SEQUENCE [LARGE SCALE GENOMIC DNA]</scope>
    <source>
        <strain>EC4115 / EHEC</strain>
    </source>
</reference>
<comment type="function">
    <text evidence="1">Involved in the catabolism of L-rhamnose (6-deoxy-L-mannose). Catalyzes the transfer of the gamma-phosphate group from ATP to the 1-hydroxyl group of L-rhamnulose to yield L-rhamnulose 1-phosphate.</text>
</comment>
<comment type="catalytic activity">
    <reaction evidence="1">
        <text>L-rhamnulose + ATP = L-rhamnulose 1-phosphate + ADP + H(+)</text>
        <dbReference type="Rhea" id="RHEA:20117"/>
        <dbReference type="ChEBI" id="CHEBI:15378"/>
        <dbReference type="ChEBI" id="CHEBI:17897"/>
        <dbReference type="ChEBI" id="CHEBI:30616"/>
        <dbReference type="ChEBI" id="CHEBI:58313"/>
        <dbReference type="ChEBI" id="CHEBI:456216"/>
        <dbReference type="EC" id="2.7.1.5"/>
    </reaction>
</comment>
<comment type="cofactor">
    <cofactor evidence="1">
        <name>Mg(2+)</name>
        <dbReference type="ChEBI" id="CHEBI:18420"/>
    </cofactor>
</comment>
<comment type="pathway">
    <text evidence="1">Carbohydrate degradation; L-rhamnose degradation; glycerone phosphate from L-rhamnose: step 2/3.</text>
</comment>
<comment type="subunit">
    <text evidence="1">Monomer.</text>
</comment>
<comment type="similarity">
    <text evidence="1">Belongs to the rhamnulokinase family.</text>
</comment>
<organism>
    <name type="scientific">Escherichia coli O157:H7 (strain EC4115 / EHEC)</name>
    <dbReference type="NCBI Taxonomy" id="444450"/>
    <lineage>
        <taxon>Bacteria</taxon>
        <taxon>Pseudomonadati</taxon>
        <taxon>Pseudomonadota</taxon>
        <taxon>Gammaproteobacteria</taxon>
        <taxon>Enterobacterales</taxon>
        <taxon>Enterobacteriaceae</taxon>
        <taxon>Escherichia</taxon>
    </lineage>
</organism>
<protein>
    <recommendedName>
        <fullName evidence="1">Rhamnulokinase</fullName>
        <shortName evidence="1">RhaB</shortName>
        <ecNumber evidence="1">2.7.1.5</ecNumber>
    </recommendedName>
    <alternativeName>
        <fullName evidence="1">ATP:L-rhamnulose phosphotransferase</fullName>
    </alternativeName>
    <alternativeName>
        <fullName evidence="1">L-rhamnulose 1-kinase</fullName>
    </alternativeName>
    <alternativeName>
        <fullName evidence="1">Rhamnulose kinase</fullName>
    </alternativeName>
</protein>
<sequence>MTFRNCVAVDLGASSGRVMLARYERECRSLTLREIHRFNNGLHSQNGYVTWDVDSLESAIRLGLNKVCEEGIRIDSIGIDTWGVDFVLLDQQGQRVGLPVAYRDSRTNGLMAQAQQQLGKRDIYQRSGIQFLPFNTLYQLRALTEQQPELIPHIAHALLMPDYFSYRLTGKMNWEYTNATTTQLVNINSDDWDESLLAWSGANKAWFGRPTHPGNVIGHWICPQGNEIPVVAVASHDTASAVIASPLNGSRAAYLSSGTWSLMGFESQTPFTNDTALAANITNEGGAEGRYRVLKNIMGLWLLQRVLQERQINDLPALISATQALPACRFIINPNDDRFINPETMCSEIQAACRETAQPIPESDAELARCIFDSLALLYADVLHELAQLRGEDFSQLHIVGGGCQNTLLNQLCADACGIRVIAGPVEASTLGNIGIQLMTLDELNNVDDFRQVVSTTANLTTFTPNPDSEIAHYVARIHSTRQTKELCA</sequence>